<dbReference type="EC" id="6.1.1.19" evidence="1"/>
<dbReference type="EMBL" id="AM946015">
    <property type="protein sequence ID" value="CAR43791.1"/>
    <property type="molecule type" value="Genomic_DNA"/>
</dbReference>
<dbReference type="RefSeq" id="WP_015912079.1">
    <property type="nucleotide sequence ID" value="NC_012004.1"/>
</dbReference>
<dbReference type="SMR" id="B9DW76"/>
<dbReference type="STRING" id="218495.SUB1789"/>
<dbReference type="KEGG" id="sub:SUB1789"/>
<dbReference type="eggNOG" id="COG0018">
    <property type="taxonomic scope" value="Bacteria"/>
</dbReference>
<dbReference type="HOGENOM" id="CLU_006406_6_1_9"/>
<dbReference type="OrthoDB" id="9805987at2"/>
<dbReference type="Proteomes" id="UP000000449">
    <property type="component" value="Chromosome"/>
</dbReference>
<dbReference type="GO" id="GO:0005737">
    <property type="term" value="C:cytoplasm"/>
    <property type="evidence" value="ECO:0007669"/>
    <property type="project" value="UniProtKB-SubCell"/>
</dbReference>
<dbReference type="GO" id="GO:0004814">
    <property type="term" value="F:arginine-tRNA ligase activity"/>
    <property type="evidence" value="ECO:0007669"/>
    <property type="project" value="UniProtKB-UniRule"/>
</dbReference>
<dbReference type="GO" id="GO:0005524">
    <property type="term" value="F:ATP binding"/>
    <property type="evidence" value="ECO:0007669"/>
    <property type="project" value="UniProtKB-UniRule"/>
</dbReference>
<dbReference type="GO" id="GO:0006420">
    <property type="term" value="P:arginyl-tRNA aminoacylation"/>
    <property type="evidence" value="ECO:0007669"/>
    <property type="project" value="UniProtKB-UniRule"/>
</dbReference>
<dbReference type="CDD" id="cd07956">
    <property type="entry name" value="Anticodon_Ia_Arg"/>
    <property type="match status" value="1"/>
</dbReference>
<dbReference type="CDD" id="cd00671">
    <property type="entry name" value="ArgRS_core"/>
    <property type="match status" value="1"/>
</dbReference>
<dbReference type="FunFam" id="3.40.50.620:FF:000116">
    <property type="entry name" value="Arginine--tRNA ligase"/>
    <property type="match status" value="1"/>
</dbReference>
<dbReference type="FunFam" id="1.10.730.10:FF:000006">
    <property type="entry name" value="Arginyl-tRNA synthetase 2, mitochondrial"/>
    <property type="match status" value="1"/>
</dbReference>
<dbReference type="Gene3D" id="3.30.1360.70">
    <property type="entry name" value="Arginyl tRNA synthetase N-terminal domain"/>
    <property type="match status" value="1"/>
</dbReference>
<dbReference type="Gene3D" id="3.40.50.620">
    <property type="entry name" value="HUPs"/>
    <property type="match status" value="1"/>
</dbReference>
<dbReference type="Gene3D" id="1.10.730.10">
    <property type="entry name" value="Isoleucyl-tRNA Synthetase, Domain 1"/>
    <property type="match status" value="1"/>
</dbReference>
<dbReference type="HAMAP" id="MF_00123">
    <property type="entry name" value="Arg_tRNA_synth"/>
    <property type="match status" value="1"/>
</dbReference>
<dbReference type="InterPro" id="IPR001278">
    <property type="entry name" value="Arg-tRNA-ligase"/>
</dbReference>
<dbReference type="InterPro" id="IPR005148">
    <property type="entry name" value="Arg-tRNA-synth_N"/>
</dbReference>
<dbReference type="InterPro" id="IPR036695">
    <property type="entry name" value="Arg-tRNA-synth_N_sf"/>
</dbReference>
<dbReference type="InterPro" id="IPR035684">
    <property type="entry name" value="ArgRS_core"/>
</dbReference>
<dbReference type="InterPro" id="IPR008909">
    <property type="entry name" value="DALR_anticod-bd"/>
</dbReference>
<dbReference type="InterPro" id="IPR014729">
    <property type="entry name" value="Rossmann-like_a/b/a_fold"/>
</dbReference>
<dbReference type="InterPro" id="IPR009080">
    <property type="entry name" value="tRNAsynth_Ia_anticodon-bd"/>
</dbReference>
<dbReference type="NCBIfam" id="TIGR00456">
    <property type="entry name" value="argS"/>
    <property type="match status" value="1"/>
</dbReference>
<dbReference type="PANTHER" id="PTHR11956:SF5">
    <property type="entry name" value="ARGININE--TRNA LIGASE, CYTOPLASMIC"/>
    <property type="match status" value="1"/>
</dbReference>
<dbReference type="PANTHER" id="PTHR11956">
    <property type="entry name" value="ARGINYL-TRNA SYNTHETASE"/>
    <property type="match status" value="1"/>
</dbReference>
<dbReference type="Pfam" id="PF03485">
    <property type="entry name" value="Arg_tRNA_synt_N"/>
    <property type="match status" value="1"/>
</dbReference>
<dbReference type="Pfam" id="PF05746">
    <property type="entry name" value="DALR_1"/>
    <property type="match status" value="1"/>
</dbReference>
<dbReference type="Pfam" id="PF00750">
    <property type="entry name" value="tRNA-synt_1d"/>
    <property type="match status" value="1"/>
</dbReference>
<dbReference type="PRINTS" id="PR01038">
    <property type="entry name" value="TRNASYNTHARG"/>
</dbReference>
<dbReference type="SMART" id="SM01016">
    <property type="entry name" value="Arg_tRNA_synt_N"/>
    <property type="match status" value="1"/>
</dbReference>
<dbReference type="SMART" id="SM00836">
    <property type="entry name" value="DALR_1"/>
    <property type="match status" value="1"/>
</dbReference>
<dbReference type="SUPFAM" id="SSF47323">
    <property type="entry name" value="Anticodon-binding domain of a subclass of class I aminoacyl-tRNA synthetases"/>
    <property type="match status" value="1"/>
</dbReference>
<dbReference type="SUPFAM" id="SSF55190">
    <property type="entry name" value="Arginyl-tRNA synthetase (ArgRS), N-terminal 'additional' domain"/>
    <property type="match status" value="1"/>
</dbReference>
<dbReference type="SUPFAM" id="SSF52374">
    <property type="entry name" value="Nucleotidylyl transferase"/>
    <property type="match status" value="1"/>
</dbReference>
<reference key="1">
    <citation type="journal article" date="2009" name="BMC Genomics">
        <title>Evidence for niche adaptation in the genome of the bovine pathogen Streptococcus uberis.</title>
        <authorList>
            <person name="Ward P.N."/>
            <person name="Holden M.T.G."/>
            <person name="Leigh J.A."/>
            <person name="Lennard N."/>
            <person name="Bignell A."/>
            <person name="Barron A."/>
            <person name="Clark L."/>
            <person name="Quail M.A."/>
            <person name="Woodward J."/>
            <person name="Barrell B.G."/>
            <person name="Egan S.A."/>
            <person name="Field T.R."/>
            <person name="Maskell D."/>
            <person name="Kehoe M."/>
            <person name="Dowson C.G."/>
            <person name="Chanter N."/>
            <person name="Whatmore A.M."/>
            <person name="Bentley S.D."/>
            <person name="Parkhill J."/>
        </authorList>
    </citation>
    <scope>NUCLEOTIDE SEQUENCE [LARGE SCALE GENOMIC DNA]</scope>
    <source>
        <strain>ATCC BAA-854 / 0140J</strain>
    </source>
</reference>
<sequence>MDTKTLIANDIAKVVPELDQETIYNLLETPKNSDMGDVAFPAFSLAKVLRKAPQMIAGELAEKIDAAQYEKVMAVGPYINFFLDKSSISKEVLEAVIKEKANYGQQHIGDGQNVTLDMSSPNIAKPFSVGHLRSTVIADAIGHIYSKLGYNSIRINHLGDWGKQFGMLIVAYKLWGDRATVEANPIDELLKLYVRINAEAEENPELDEQARQWFKKLEDGDKEAWDLWQWFRDESLVEFNRIYDKLDVSFDHFHGEAFYNDKMDEGIQILEDKNLLKESKGAQIVDLEKYNLPPALIKKSDGATLYITRDMATAMYRQRTFNFVKNIYVVGQEQSHHFKQLKAVLKEMGFDWSDDMIHVSFGLVTKNKKKLSTRKGNIIRLEPTLDEAVSRALTQIEAKNPDLENKEDVAHAVGVGAVKFYDLKTDRDNGYDFDLEAMVSFEGETGPYVQYTYARIQSILRKADFTPNEETPYSLNDAESWEIIKLLQGFAANIERAAEKYDPSIIAKFAIQLAQSFNRYYAHTRILDESEERDSRLALCYATAVVLKESLRLLGVQAPEKM</sequence>
<name>SYR_STRU0</name>
<evidence type="ECO:0000255" key="1">
    <source>
        <dbReference type="HAMAP-Rule" id="MF_00123"/>
    </source>
</evidence>
<feature type="chain" id="PRO_1000198939" description="Arginine--tRNA ligase">
    <location>
        <begin position="1"/>
        <end position="562"/>
    </location>
</feature>
<feature type="short sequence motif" description="'HIGH' region">
    <location>
        <begin position="121"/>
        <end position="131"/>
    </location>
</feature>
<organism>
    <name type="scientific">Streptococcus uberis (strain ATCC BAA-854 / 0140J)</name>
    <dbReference type="NCBI Taxonomy" id="218495"/>
    <lineage>
        <taxon>Bacteria</taxon>
        <taxon>Bacillati</taxon>
        <taxon>Bacillota</taxon>
        <taxon>Bacilli</taxon>
        <taxon>Lactobacillales</taxon>
        <taxon>Streptococcaceae</taxon>
        <taxon>Streptococcus</taxon>
    </lineage>
</organism>
<accession>B9DW76</accession>
<protein>
    <recommendedName>
        <fullName evidence="1">Arginine--tRNA ligase</fullName>
        <ecNumber evidence="1">6.1.1.19</ecNumber>
    </recommendedName>
    <alternativeName>
        <fullName evidence="1">Arginyl-tRNA synthetase</fullName>
        <shortName evidence="1">ArgRS</shortName>
    </alternativeName>
</protein>
<gene>
    <name evidence="1" type="primary">argS</name>
    <name type="ordered locus">SUB1789</name>
</gene>
<proteinExistence type="inferred from homology"/>
<keyword id="KW-0030">Aminoacyl-tRNA synthetase</keyword>
<keyword id="KW-0067">ATP-binding</keyword>
<keyword id="KW-0963">Cytoplasm</keyword>
<keyword id="KW-0436">Ligase</keyword>
<keyword id="KW-0547">Nucleotide-binding</keyword>
<keyword id="KW-0648">Protein biosynthesis</keyword>
<keyword id="KW-1185">Reference proteome</keyword>
<comment type="catalytic activity">
    <reaction evidence="1">
        <text>tRNA(Arg) + L-arginine + ATP = L-arginyl-tRNA(Arg) + AMP + diphosphate</text>
        <dbReference type="Rhea" id="RHEA:20301"/>
        <dbReference type="Rhea" id="RHEA-COMP:9658"/>
        <dbReference type="Rhea" id="RHEA-COMP:9673"/>
        <dbReference type="ChEBI" id="CHEBI:30616"/>
        <dbReference type="ChEBI" id="CHEBI:32682"/>
        <dbReference type="ChEBI" id="CHEBI:33019"/>
        <dbReference type="ChEBI" id="CHEBI:78442"/>
        <dbReference type="ChEBI" id="CHEBI:78513"/>
        <dbReference type="ChEBI" id="CHEBI:456215"/>
        <dbReference type="EC" id="6.1.1.19"/>
    </reaction>
</comment>
<comment type="subunit">
    <text evidence="1">Monomer.</text>
</comment>
<comment type="subcellular location">
    <subcellularLocation>
        <location evidence="1">Cytoplasm</location>
    </subcellularLocation>
</comment>
<comment type="similarity">
    <text evidence="1">Belongs to the class-I aminoacyl-tRNA synthetase family.</text>
</comment>